<keyword id="KW-0687">Ribonucleoprotein</keyword>
<keyword id="KW-0689">Ribosomal protein</keyword>
<keyword id="KW-0694">RNA-binding</keyword>
<keyword id="KW-0699">rRNA-binding</keyword>
<protein>
    <recommendedName>
        <fullName evidence="1">Small ribosomal subunit protein bS18</fullName>
    </recommendedName>
    <alternativeName>
        <fullName evidence="2">30S ribosomal protein S18</fullName>
    </alternativeName>
</protein>
<evidence type="ECO:0000255" key="1">
    <source>
        <dbReference type="HAMAP-Rule" id="MF_00270"/>
    </source>
</evidence>
<evidence type="ECO:0000305" key="2"/>
<gene>
    <name evidence="1" type="primary">rpsR</name>
    <name type="ordered locus">SpyM3_1580</name>
</gene>
<comment type="function">
    <text evidence="1">Binds as a heterodimer with protein bS6 to the central domain of the 16S rRNA, where it helps stabilize the platform of the 30S subunit.</text>
</comment>
<comment type="subunit">
    <text evidence="1">Part of the 30S ribosomal subunit. Forms a tight heterodimer with protein bS6.</text>
</comment>
<comment type="similarity">
    <text evidence="1">Belongs to the bacterial ribosomal protein bS18 family.</text>
</comment>
<sequence length="79" mass="9204">MAQQRRGGFKRRKKVDFIAANKIEYVDYKDTELLSRFVSERGKILPRRVTGTSAKNQRKVTTAIKRARVMALMPYVNED</sequence>
<reference key="1">
    <citation type="journal article" date="2002" name="Proc. Natl. Acad. Sci. U.S.A.">
        <title>Genome sequence of a serotype M3 strain of group A Streptococcus: phage-encoded toxins, the high-virulence phenotype, and clone emergence.</title>
        <authorList>
            <person name="Beres S.B."/>
            <person name="Sylva G.L."/>
            <person name="Barbian K.D."/>
            <person name="Lei B."/>
            <person name="Hoff J.S."/>
            <person name="Mammarella N.D."/>
            <person name="Liu M.-Y."/>
            <person name="Smoot J.C."/>
            <person name="Porcella S.F."/>
            <person name="Parkins L.D."/>
            <person name="Campbell D.S."/>
            <person name="Smith T.M."/>
            <person name="McCormick J.K."/>
            <person name="Leung D.Y.M."/>
            <person name="Schlievert P.M."/>
            <person name="Musser J.M."/>
        </authorList>
    </citation>
    <scope>NUCLEOTIDE SEQUENCE [LARGE SCALE GENOMIC DNA]</scope>
    <source>
        <strain>ATCC BAA-595 / MGAS315</strain>
    </source>
</reference>
<feature type="chain" id="PRO_0000111242" description="Small ribosomal subunit protein bS18">
    <location>
        <begin position="1"/>
        <end position="79"/>
    </location>
</feature>
<proteinExistence type="inferred from homology"/>
<organism>
    <name type="scientific">Streptococcus pyogenes serotype M3 (strain ATCC BAA-595 / MGAS315)</name>
    <dbReference type="NCBI Taxonomy" id="198466"/>
    <lineage>
        <taxon>Bacteria</taxon>
        <taxon>Bacillati</taxon>
        <taxon>Bacillota</taxon>
        <taxon>Bacilli</taxon>
        <taxon>Lactobacillales</taxon>
        <taxon>Streptococcaceae</taxon>
        <taxon>Streptococcus</taxon>
    </lineage>
</organism>
<accession>P0DE80</accession>
<accession>P66476</accession>
<accession>Q99Y81</accession>
<name>RS18_STRP3</name>
<dbReference type="EMBL" id="AE014074">
    <property type="protein sequence ID" value="AAM80187.1"/>
    <property type="molecule type" value="Genomic_DNA"/>
</dbReference>
<dbReference type="RefSeq" id="WP_002983142.1">
    <property type="nucleotide sequence ID" value="NC_004070.1"/>
</dbReference>
<dbReference type="SMR" id="P0DE80"/>
<dbReference type="GeneID" id="93826879"/>
<dbReference type="KEGG" id="spg:SpyM3_1580"/>
<dbReference type="HOGENOM" id="CLU_148710_2_2_9"/>
<dbReference type="Proteomes" id="UP000000564">
    <property type="component" value="Chromosome"/>
</dbReference>
<dbReference type="GO" id="GO:0022627">
    <property type="term" value="C:cytosolic small ribosomal subunit"/>
    <property type="evidence" value="ECO:0007669"/>
    <property type="project" value="TreeGrafter"/>
</dbReference>
<dbReference type="GO" id="GO:0070181">
    <property type="term" value="F:small ribosomal subunit rRNA binding"/>
    <property type="evidence" value="ECO:0007669"/>
    <property type="project" value="TreeGrafter"/>
</dbReference>
<dbReference type="GO" id="GO:0003735">
    <property type="term" value="F:structural constituent of ribosome"/>
    <property type="evidence" value="ECO:0007669"/>
    <property type="project" value="InterPro"/>
</dbReference>
<dbReference type="GO" id="GO:0006412">
    <property type="term" value="P:translation"/>
    <property type="evidence" value="ECO:0007669"/>
    <property type="project" value="UniProtKB-UniRule"/>
</dbReference>
<dbReference type="FunFam" id="4.10.640.10:FF:000003">
    <property type="entry name" value="30S ribosomal protein S18"/>
    <property type="match status" value="1"/>
</dbReference>
<dbReference type="Gene3D" id="4.10.640.10">
    <property type="entry name" value="Ribosomal protein S18"/>
    <property type="match status" value="1"/>
</dbReference>
<dbReference type="HAMAP" id="MF_00270">
    <property type="entry name" value="Ribosomal_bS18"/>
    <property type="match status" value="1"/>
</dbReference>
<dbReference type="InterPro" id="IPR001648">
    <property type="entry name" value="Ribosomal_bS18"/>
</dbReference>
<dbReference type="InterPro" id="IPR018275">
    <property type="entry name" value="Ribosomal_bS18_CS"/>
</dbReference>
<dbReference type="InterPro" id="IPR036870">
    <property type="entry name" value="Ribosomal_bS18_sf"/>
</dbReference>
<dbReference type="NCBIfam" id="TIGR00165">
    <property type="entry name" value="S18"/>
    <property type="match status" value="1"/>
</dbReference>
<dbReference type="PANTHER" id="PTHR13479">
    <property type="entry name" value="30S RIBOSOMAL PROTEIN S18"/>
    <property type="match status" value="1"/>
</dbReference>
<dbReference type="PANTHER" id="PTHR13479:SF40">
    <property type="entry name" value="SMALL RIBOSOMAL SUBUNIT PROTEIN BS18M"/>
    <property type="match status" value="1"/>
</dbReference>
<dbReference type="Pfam" id="PF01084">
    <property type="entry name" value="Ribosomal_S18"/>
    <property type="match status" value="1"/>
</dbReference>
<dbReference type="PRINTS" id="PR00974">
    <property type="entry name" value="RIBOSOMALS18"/>
</dbReference>
<dbReference type="SUPFAM" id="SSF46911">
    <property type="entry name" value="Ribosomal protein S18"/>
    <property type="match status" value="1"/>
</dbReference>
<dbReference type="PROSITE" id="PS00057">
    <property type="entry name" value="RIBOSOMAL_S18"/>
    <property type="match status" value="1"/>
</dbReference>